<reference key="1">
    <citation type="journal article" date="1996" name="Science">
        <title>Complete genome sequence of the methanogenic archaeon, Methanococcus jannaschii.</title>
        <authorList>
            <person name="Bult C.J."/>
            <person name="White O."/>
            <person name="Olsen G.J."/>
            <person name="Zhou L."/>
            <person name="Fleischmann R.D."/>
            <person name="Sutton G.G."/>
            <person name="Blake J.A."/>
            <person name="FitzGerald L.M."/>
            <person name="Clayton R.A."/>
            <person name="Gocayne J.D."/>
            <person name="Kerlavage A.R."/>
            <person name="Dougherty B.A."/>
            <person name="Tomb J.-F."/>
            <person name="Adams M.D."/>
            <person name="Reich C.I."/>
            <person name="Overbeek R."/>
            <person name="Kirkness E.F."/>
            <person name="Weinstock K.G."/>
            <person name="Merrick J.M."/>
            <person name="Glodek A."/>
            <person name="Scott J.L."/>
            <person name="Geoghagen N.S.M."/>
            <person name="Weidman J.F."/>
            <person name="Fuhrmann J.L."/>
            <person name="Nguyen D."/>
            <person name="Utterback T.R."/>
            <person name="Kelley J.M."/>
            <person name="Peterson J.D."/>
            <person name="Sadow P.W."/>
            <person name="Hanna M.C."/>
            <person name="Cotton M.D."/>
            <person name="Roberts K.M."/>
            <person name="Hurst M.A."/>
            <person name="Kaine B.P."/>
            <person name="Borodovsky M."/>
            <person name="Klenk H.-P."/>
            <person name="Fraser C.M."/>
            <person name="Smith H.O."/>
            <person name="Woese C.R."/>
            <person name="Venter J.C."/>
        </authorList>
    </citation>
    <scope>NUCLEOTIDE SEQUENCE [LARGE SCALE GENOMIC DNA]</scope>
    <source>
        <strain>ATCC 43067 / DSM 2661 / JAL-1 / JCM 10045 / NBRC 100440</strain>
    </source>
</reference>
<gene>
    <name type="ordered locus">MJ1287</name>
</gene>
<dbReference type="EMBL" id="L77117">
    <property type="protein sequence ID" value="AAB99289.1"/>
    <property type="molecule type" value="Genomic_DNA"/>
</dbReference>
<dbReference type="PIR" id="F64460">
    <property type="entry name" value="F64460"/>
</dbReference>
<dbReference type="SMR" id="Q58683"/>
<dbReference type="STRING" id="243232.MJ_1287"/>
<dbReference type="PaxDb" id="243232-MJ_1287"/>
<dbReference type="EnsemblBacteria" id="AAB99289">
    <property type="protein sequence ID" value="AAB99289"/>
    <property type="gene ID" value="MJ_1287"/>
</dbReference>
<dbReference type="KEGG" id="mja:MJ_1287"/>
<dbReference type="eggNOG" id="arCOG01818">
    <property type="taxonomic scope" value="Archaea"/>
</dbReference>
<dbReference type="HOGENOM" id="CLU_961776_0_0_2"/>
<dbReference type="InParanoid" id="Q58683"/>
<dbReference type="PhylomeDB" id="Q58683"/>
<dbReference type="Proteomes" id="UP000000805">
    <property type="component" value="Chromosome"/>
</dbReference>
<dbReference type="GO" id="GO:0016887">
    <property type="term" value="F:ATP hydrolysis activity"/>
    <property type="evidence" value="ECO:0007669"/>
    <property type="project" value="InterPro"/>
</dbReference>
<dbReference type="CDD" id="cd01130">
    <property type="entry name" value="VirB11-like_ATPase"/>
    <property type="match status" value="1"/>
</dbReference>
<dbReference type="Gene3D" id="3.40.50.300">
    <property type="entry name" value="P-loop containing nucleotide triphosphate hydrolases"/>
    <property type="match status" value="1"/>
</dbReference>
<dbReference type="InterPro" id="IPR027417">
    <property type="entry name" value="P-loop_NTPase"/>
</dbReference>
<dbReference type="InterPro" id="IPR001482">
    <property type="entry name" value="T2SS/T4SS_dom"/>
</dbReference>
<dbReference type="InterPro" id="IPR050921">
    <property type="entry name" value="T4SS_GSP_E_ATPase"/>
</dbReference>
<dbReference type="PANTHER" id="PTHR30486">
    <property type="entry name" value="TWITCHING MOTILITY PROTEIN PILT"/>
    <property type="match status" value="1"/>
</dbReference>
<dbReference type="PANTHER" id="PTHR30486:SF6">
    <property type="entry name" value="TYPE IV PILUS RETRACTATION ATPASE PILT"/>
    <property type="match status" value="1"/>
</dbReference>
<dbReference type="Pfam" id="PF00437">
    <property type="entry name" value="T2SSE"/>
    <property type="match status" value="1"/>
</dbReference>
<dbReference type="SUPFAM" id="SSF52540">
    <property type="entry name" value="P-loop containing nucleoside triphosphate hydrolases"/>
    <property type="match status" value="1"/>
</dbReference>
<feature type="chain" id="PRO_0000207311" description="Uncharacterized protein MJ1287">
    <location>
        <begin position="1"/>
        <end position="270"/>
    </location>
</feature>
<proteinExistence type="inferred from homology"/>
<keyword id="KW-1185">Reference proteome</keyword>
<protein>
    <recommendedName>
        <fullName>Uncharacterized protein MJ1287</fullName>
    </recommendedName>
</protein>
<comment type="similarity">
    <text evidence="1">Belongs to the GSP E family.</text>
</comment>
<evidence type="ECO:0000305" key="1"/>
<accession>Q58683</accession>
<sequence length="270" mass="31254">MPTDLIRYGSISPEMLAYLWLLIEYKNSIMVAGEVATGKTTLLNAFSLFIPPQMKIVSIEDTPEIRLYHENWIAGTTRSGFGGEEYEITMMDLLKAALRQRPDYLIVGEVRGEEAKILFQAITTGHLALSTIHAKSPEAVIRRLNAEPMNIPKIMLEQLNAICMQVRLIYKGRFVRRTKSITEIVEYDPKIDDIILHDVFRWNPEDDTFEFSGESYLLRRIAEFIGISEKEIINELHSRAEFLRNLCKTKPNFEEFVKKICEYKEYHKGD</sequence>
<organism>
    <name type="scientific">Methanocaldococcus jannaschii (strain ATCC 43067 / DSM 2661 / JAL-1 / JCM 10045 / NBRC 100440)</name>
    <name type="common">Methanococcus jannaschii</name>
    <dbReference type="NCBI Taxonomy" id="243232"/>
    <lineage>
        <taxon>Archaea</taxon>
        <taxon>Methanobacteriati</taxon>
        <taxon>Methanobacteriota</taxon>
        <taxon>Methanomada group</taxon>
        <taxon>Methanococci</taxon>
        <taxon>Methanococcales</taxon>
        <taxon>Methanocaldococcaceae</taxon>
        <taxon>Methanocaldococcus</taxon>
    </lineage>
</organism>
<name>Y1287_METJA</name>